<dbReference type="EMBL" id="U18466">
    <property type="protein sequence ID" value="AAA65268.1"/>
    <property type="molecule type" value="Genomic_DNA"/>
</dbReference>
<dbReference type="RefSeq" id="NP_042732.1">
    <property type="nucleotide sequence ID" value="NC_001659.2"/>
</dbReference>
<dbReference type="GeneID" id="22220420"/>
<dbReference type="KEGG" id="vg:22220420"/>
<dbReference type="Proteomes" id="UP000000624">
    <property type="component" value="Segment"/>
</dbReference>
<organismHost>
    <name type="scientific">Ornithodoros</name>
    <name type="common">relapsing fever ticks</name>
    <dbReference type="NCBI Taxonomy" id="6937"/>
</organismHost>
<organismHost>
    <name type="scientific">Sus scrofa</name>
    <name type="common">Pig</name>
    <dbReference type="NCBI Taxonomy" id="9823"/>
</organismHost>
<evidence type="ECO:0000269" key="1">
    <source>
    </source>
</evidence>
<evidence type="ECO:0000269" key="2">
    <source>
    </source>
</evidence>
<evidence type="ECO:0000305" key="3"/>
<keyword id="KW-0244">Early protein</keyword>
<keyword id="KW-1185">Reference proteome</keyword>
<name>36015_ASFB7</name>
<gene>
    <name type="ordered locus">BA71V-038</name>
    <name type="ORF">A276R</name>
</gene>
<sequence length="276" mass="31638">MVLIEFLTGFFYLYGKRLFSISKVMDMICLDYYTIIPAPLAMMLAARIKNYDLMKRLHEWEISVDYALLVVDDVPSIDFCLSLGAKSPTRAQKRQLLRDNTFNPVYKYLMNCSGFPTRREKNIPCDVQCERLQKNIIKELVFNCSVLLEMVLHTEREYAYALHCAAKHNQLPILMYCWQQSTDAESILLKTCCSDKNINCFNYCILYGGAQNLNAAMVEAAKHDARMLINYCVMLGGRSLNEAKETAAMFGHIECAQHCFELQSYVMDALNADDAD</sequence>
<accession>Q65141</accession>
<protein>
    <recommendedName>
        <fullName>Protein MGF 360-15R</fullName>
    </recommendedName>
</protein>
<reference key="1">
    <citation type="journal article" date="1995" name="Virology">
        <title>Analysis of the complete nucleotide sequence of African swine fever virus.</title>
        <authorList>
            <person name="Yanez R.J."/>
            <person name="Rodriguez J.M."/>
            <person name="Nogal M.L."/>
            <person name="Yuste L."/>
            <person name="Enriquez C."/>
            <person name="Rodriguez J.F."/>
            <person name="Vinuela E."/>
        </authorList>
    </citation>
    <scope>NUCLEOTIDE SEQUENCE [LARGE SCALE GENOMIC DNA]</scope>
</reference>
<reference key="2">
    <citation type="journal article" date="2001" name="J. Virol.">
        <title>African swine fever virus multigene family 360 and 530 genes are novel macrophage host range determinants.</title>
        <authorList>
            <person name="Zsak L."/>
            <person name="Lu Z."/>
            <person name="Burrage T.G."/>
            <person name="Neilan J.G."/>
            <person name="Kutish G.F."/>
            <person name="Moore D.M."/>
            <person name="Rock D.L."/>
        </authorList>
    </citation>
    <scope>FUNCTION</scope>
</reference>
<reference key="3">
    <citation type="journal article" date="2020" name="J. Virol.">
        <title>The African Swine Fever Virus Transcriptome.</title>
        <authorList>
            <person name="Cackett G."/>
            <person name="Matelska D."/>
            <person name="Sykora M."/>
            <person name="Portugal R."/>
            <person name="Malecki M."/>
            <person name="Baehler J."/>
            <person name="Dixon L."/>
            <person name="Werner F."/>
        </authorList>
    </citation>
    <scope>INDUCTION</scope>
</reference>
<proteinExistence type="evidence at transcript level"/>
<feature type="chain" id="PRO_0000373292" description="Protein MGF 360-15R">
    <location>
        <begin position="1"/>
        <end position="276"/>
    </location>
</feature>
<comment type="function">
    <text evidence="1">Plays a role in virus cell tropism, and may be required for efficient virus replication in macrophages.</text>
</comment>
<comment type="induction">
    <text evidence="2">Expressed in the early phase of the viral replicative cycle.</text>
</comment>
<comment type="similarity">
    <text evidence="3">Belongs to the asfivirus MGF 360 family.</text>
</comment>
<organism>
    <name type="scientific">African swine fever virus (strain Badajoz 1971 Vero-adapted)</name>
    <name type="common">Ba71V</name>
    <name type="synonym">ASFV</name>
    <dbReference type="NCBI Taxonomy" id="10498"/>
    <lineage>
        <taxon>Viruses</taxon>
        <taxon>Varidnaviria</taxon>
        <taxon>Bamfordvirae</taxon>
        <taxon>Nucleocytoviricota</taxon>
        <taxon>Pokkesviricetes</taxon>
        <taxon>Asfuvirales</taxon>
        <taxon>Asfarviridae</taxon>
        <taxon>Asfivirus</taxon>
        <taxon>African swine fever virus</taxon>
    </lineage>
</organism>